<protein>
    <recommendedName>
        <fullName evidence="4">Serine incorporator 2</fullName>
    </recommendedName>
    <alternativeName>
        <fullName>Tumor differentially expressed protein 2-like</fullName>
    </alternativeName>
</protein>
<gene>
    <name evidence="5" type="primary">SERINC2</name>
    <name type="synonym">TDE2L</name>
    <name type="ORF">FKSG84</name>
    <name type="ORF">UNQ263/PRO300</name>
</gene>
<organism>
    <name type="scientific">Homo sapiens</name>
    <name type="common">Human</name>
    <dbReference type="NCBI Taxonomy" id="9606"/>
    <lineage>
        <taxon>Eukaryota</taxon>
        <taxon>Metazoa</taxon>
        <taxon>Chordata</taxon>
        <taxon>Craniata</taxon>
        <taxon>Vertebrata</taxon>
        <taxon>Euteleostomi</taxon>
        <taxon>Mammalia</taxon>
        <taxon>Eutheria</taxon>
        <taxon>Euarchontoglires</taxon>
        <taxon>Primates</taxon>
        <taxon>Haplorrhini</taxon>
        <taxon>Catarrhini</taxon>
        <taxon>Hominidae</taxon>
        <taxon>Homo</taxon>
    </lineage>
</organism>
<sequence>MGACLGACSLLSCASCLCGSAPCILCSCCPASRNSTVSRLIFTFFLFLGVLVSIIMLSPGVESQLYKLPWVCEEGAGIPTVLQGHIDCGSLLGYRAVYRMCFATAAFFFFFTLLMLCVSSSRDPRAAIQNGFWFFKFLILVGLTVGAFYIPDGSFTNIWFYFGVVGSFLFILIQLVLLIDFAHSWNQRWLGKAEECDSRAWYAGLFFFTLLFYLLSIAAVALMFMYYTEPSGCHEGKVFISLNLTFCVCVSIAAVLPKVQDAQPNSGLLQASVITLYTMFVTWSALSSIPEQKCNPHLPTQLGNETVVAGPEGYETQWWDAPSIVGLIIFLLCTLFISLRSSDHRQVNSLMQTEECPPMLDATQQQQQVAACEGRAFDNEQDGVTYSYSFFHFCLVLASLHVMMTLTNWYKPGETRKMISTWTAVWVKICASWAGLLLYLWTLVAPLLLRNRDFS</sequence>
<feature type="chain" id="PRO_0000218968" description="Serine incorporator 2">
    <location>
        <begin position="1"/>
        <end position="455"/>
    </location>
</feature>
<feature type="transmembrane region" description="Helical" evidence="1">
    <location>
        <begin position="5"/>
        <end position="27"/>
    </location>
</feature>
<feature type="transmembrane region" description="Helical" evidence="1">
    <location>
        <begin position="40"/>
        <end position="57"/>
    </location>
</feature>
<feature type="transmembrane region" description="Helical" evidence="1">
    <location>
        <begin position="96"/>
        <end position="118"/>
    </location>
</feature>
<feature type="transmembrane region" description="Helical" evidence="1">
    <location>
        <begin position="131"/>
        <end position="150"/>
    </location>
</feature>
<feature type="transmembrane region" description="Helical" evidence="1">
    <location>
        <begin position="160"/>
        <end position="182"/>
    </location>
</feature>
<feature type="transmembrane region" description="Helical" evidence="1">
    <location>
        <begin position="202"/>
        <end position="224"/>
    </location>
</feature>
<feature type="transmembrane region" description="Helical" evidence="1">
    <location>
        <begin position="239"/>
        <end position="256"/>
    </location>
</feature>
<feature type="transmembrane region" description="Helical" evidence="1">
    <location>
        <begin position="268"/>
        <end position="290"/>
    </location>
</feature>
<feature type="transmembrane region" description="Helical" evidence="1">
    <location>
        <begin position="317"/>
        <end position="339"/>
    </location>
</feature>
<feature type="transmembrane region" description="Helical" evidence="1">
    <location>
        <begin position="385"/>
        <end position="407"/>
    </location>
</feature>
<feature type="transmembrane region" description="Helical" evidence="1">
    <location>
        <begin position="422"/>
        <end position="444"/>
    </location>
</feature>
<feature type="splice variant" id="VSP_042463" description="In isoform 3." evidence="3">
    <original>MGACLGACSLLSC</original>
    <variation>MRSMRLREEESPGPSHT</variation>
    <location>
        <begin position="1"/>
        <end position="13"/>
    </location>
</feature>
<feature type="splice variant" id="VSP_046840" description="In isoform 4." evidence="4">
    <original>MGACLGACSLLSC</original>
    <variation>MDGRMMRSMRLREEESPGPSHT</variation>
    <location>
        <begin position="1"/>
        <end position="13"/>
    </location>
</feature>
<feature type="splice variant" id="VSP_042464" description="In isoform 2." evidence="3">
    <original>CLGACSLLSC</original>
    <variation>EGAPDFLSCPRVRR</variation>
    <location>
        <begin position="4"/>
        <end position="13"/>
    </location>
</feature>
<feature type="sequence variant" id="VAR_061838" description="In dbSNP:rs34728687.">
    <original>G</original>
    <variation>S</variation>
    <location>
        <position position="303"/>
    </location>
</feature>
<feature type="sequence conflict" description="In Ref. 1; AAK83284." evidence="4" ref="1">
    <original>C</original>
    <variation>L</variation>
    <location>
        <position position="4"/>
    </location>
</feature>
<feature type="sequence conflict" description="In Ref. 4; BAH14728." evidence="4" ref="4">
    <original>V</original>
    <variation>A</variation>
    <location>
        <position position="81"/>
    </location>
</feature>
<feature type="sequence conflict" description="In Ref. 4; BAH14728." evidence="4" ref="4">
    <original>Y</original>
    <variation>H</variation>
    <location>
        <position position="98"/>
    </location>
</feature>
<feature type="sequence conflict" description="In Ref. 3; AAQ88924." evidence="4" ref="3">
    <original>F</original>
    <variation>FF</variation>
    <location>
        <position position="111"/>
    </location>
</feature>
<feature type="sequence conflict" description="In Ref. 1; AAK83284, 2; AAM22522, 3; AAQ88924, 4; BAH12803/BAH14728 and 6; AAH84580/AAI26284/AAI26286." evidence="4" ref="1 2 3 4 6">
    <original>Q</original>
    <variation>QQ</variation>
    <location>
        <position position="368"/>
    </location>
</feature>
<feature type="sequence conflict" description="In Ref. 4; BAH14728." evidence="4" ref="4">
    <original>D</original>
    <variation>G</variation>
    <location>
        <position position="382"/>
    </location>
</feature>
<feature type="sequence conflict" description="In Ref. 1; AAK83284." evidence="4" ref="1">
    <original>N</original>
    <variation>K</variation>
    <location>
        <position position="451"/>
    </location>
</feature>
<keyword id="KW-0025">Alternative splicing</keyword>
<keyword id="KW-1003">Cell membrane</keyword>
<keyword id="KW-0472">Membrane</keyword>
<keyword id="KW-1267">Proteomics identification</keyword>
<keyword id="KW-1185">Reference proteome</keyword>
<keyword id="KW-0812">Transmembrane</keyword>
<keyword id="KW-1133">Transmembrane helix</keyword>
<reference key="1">
    <citation type="submission" date="2001-02" db="EMBL/GenBank/DDBJ databases">
        <title>Cloning and characterization of FKSG84, a novel gene located on human chromosome 1.</title>
        <authorList>
            <person name="Wang Y.-G."/>
            <person name="Gong L."/>
        </authorList>
    </citation>
    <scope>NUCLEOTIDE SEQUENCE [MRNA] (ISOFORM 1)</scope>
</reference>
<reference key="2">
    <citation type="submission" date="2002-04" db="EMBL/GenBank/DDBJ databases">
        <authorList>
            <person name="Li N."/>
            <person name="Zhang W."/>
            <person name="Wan T."/>
            <person name="Cao X."/>
        </authorList>
    </citation>
    <scope>NUCLEOTIDE SEQUENCE [MRNA] (ISOFORM 1)</scope>
</reference>
<reference key="3">
    <citation type="journal article" date="2003" name="Genome Res.">
        <title>The secreted protein discovery initiative (SPDI), a large-scale effort to identify novel human secreted and transmembrane proteins: a bioinformatics assessment.</title>
        <authorList>
            <person name="Clark H.F."/>
            <person name="Gurney A.L."/>
            <person name="Abaya E."/>
            <person name="Baker K."/>
            <person name="Baldwin D.T."/>
            <person name="Brush J."/>
            <person name="Chen J."/>
            <person name="Chow B."/>
            <person name="Chui C."/>
            <person name="Crowley C."/>
            <person name="Currell B."/>
            <person name="Deuel B."/>
            <person name="Dowd P."/>
            <person name="Eaton D."/>
            <person name="Foster J.S."/>
            <person name="Grimaldi C."/>
            <person name="Gu Q."/>
            <person name="Hass P.E."/>
            <person name="Heldens S."/>
            <person name="Huang A."/>
            <person name="Kim H.S."/>
            <person name="Klimowski L."/>
            <person name="Jin Y."/>
            <person name="Johnson S."/>
            <person name="Lee J."/>
            <person name="Lewis L."/>
            <person name="Liao D."/>
            <person name="Mark M.R."/>
            <person name="Robbie E."/>
            <person name="Sanchez C."/>
            <person name="Schoenfeld J."/>
            <person name="Seshagiri S."/>
            <person name="Simmons L."/>
            <person name="Singh J."/>
            <person name="Smith V."/>
            <person name="Stinson J."/>
            <person name="Vagts A."/>
            <person name="Vandlen R.L."/>
            <person name="Watanabe C."/>
            <person name="Wieand D."/>
            <person name="Woods K."/>
            <person name="Xie M.-H."/>
            <person name="Yansura D.G."/>
            <person name="Yi S."/>
            <person name="Yu G."/>
            <person name="Yuan J."/>
            <person name="Zhang M."/>
            <person name="Zhang Z."/>
            <person name="Goddard A.D."/>
            <person name="Wood W.I."/>
            <person name="Godowski P.J."/>
            <person name="Gray A.M."/>
        </authorList>
    </citation>
    <scope>NUCLEOTIDE SEQUENCE [LARGE SCALE MRNA] (ISOFORM 1)</scope>
</reference>
<reference key="4">
    <citation type="journal article" date="2004" name="Nat. Genet.">
        <title>Complete sequencing and characterization of 21,243 full-length human cDNAs.</title>
        <authorList>
            <person name="Ota T."/>
            <person name="Suzuki Y."/>
            <person name="Nishikawa T."/>
            <person name="Otsuki T."/>
            <person name="Sugiyama T."/>
            <person name="Irie R."/>
            <person name="Wakamatsu A."/>
            <person name="Hayashi K."/>
            <person name="Sato H."/>
            <person name="Nagai K."/>
            <person name="Kimura K."/>
            <person name="Makita H."/>
            <person name="Sekine M."/>
            <person name="Obayashi M."/>
            <person name="Nishi T."/>
            <person name="Shibahara T."/>
            <person name="Tanaka T."/>
            <person name="Ishii S."/>
            <person name="Yamamoto J."/>
            <person name="Saito K."/>
            <person name="Kawai Y."/>
            <person name="Isono Y."/>
            <person name="Nakamura Y."/>
            <person name="Nagahari K."/>
            <person name="Murakami K."/>
            <person name="Yasuda T."/>
            <person name="Iwayanagi T."/>
            <person name="Wagatsuma M."/>
            <person name="Shiratori A."/>
            <person name="Sudo H."/>
            <person name="Hosoiri T."/>
            <person name="Kaku Y."/>
            <person name="Kodaira H."/>
            <person name="Kondo H."/>
            <person name="Sugawara M."/>
            <person name="Takahashi M."/>
            <person name="Kanda K."/>
            <person name="Yokoi T."/>
            <person name="Furuya T."/>
            <person name="Kikkawa E."/>
            <person name="Omura Y."/>
            <person name="Abe K."/>
            <person name="Kamihara K."/>
            <person name="Katsuta N."/>
            <person name="Sato K."/>
            <person name="Tanikawa M."/>
            <person name="Yamazaki M."/>
            <person name="Ninomiya K."/>
            <person name="Ishibashi T."/>
            <person name="Yamashita H."/>
            <person name="Murakawa K."/>
            <person name="Fujimori K."/>
            <person name="Tanai H."/>
            <person name="Kimata M."/>
            <person name="Watanabe M."/>
            <person name="Hiraoka S."/>
            <person name="Chiba Y."/>
            <person name="Ishida S."/>
            <person name="Ono Y."/>
            <person name="Takiguchi S."/>
            <person name="Watanabe S."/>
            <person name="Yosida M."/>
            <person name="Hotuta T."/>
            <person name="Kusano J."/>
            <person name="Kanehori K."/>
            <person name="Takahashi-Fujii A."/>
            <person name="Hara H."/>
            <person name="Tanase T.-O."/>
            <person name="Nomura Y."/>
            <person name="Togiya S."/>
            <person name="Komai F."/>
            <person name="Hara R."/>
            <person name="Takeuchi K."/>
            <person name="Arita M."/>
            <person name="Imose N."/>
            <person name="Musashino K."/>
            <person name="Yuuki H."/>
            <person name="Oshima A."/>
            <person name="Sasaki N."/>
            <person name="Aotsuka S."/>
            <person name="Yoshikawa Y."/>
            <person name="Matsunawa H."/>
            <person name="Ichihara T."/>
            <person name="Shiohata N."/>
            <person name="Sano S."/>
            <person name="Moriya S."/>
            <person name="Momiyama H."/>
            <person name="Satoh N."/>
            <person name="Takami S."/>
            <person name="Terashima Y."/>
            <person name="Suzuki O."/>
            <person name="Nakagawa S."/>
            <person name="Senoh A."/>
            <person name="Mizoguchi H."/>
            <person name="Goto Y."/>
            <person name="Shimizu F."/>
            <person name="Wakebe H."/>
            <person name="Hishigaki H."/>
            <person name="Watanabe T."/>
            <person name="Sugiyama A."/>
            <person name="Takemoto M."/>
            <person name="Kawakami B."/>
            <person name="Yamazaki M."/>
            <person name="Watanabe K."/>
            <person name="Kumagai A."/>
            <person name="Itakura S."/>
            <person name="Fukuzumi Y."/>
            <person name="Fujimori Y."/>
            <person name="Komiyama M."/>
            <person name="Tashiro H."/>
            <person name="Tanigami A."/>
            <person name="Fujiwara T."/>
            <person name="Ono T."/>
            <person name="Yamada K."/>
            <person name="Fujii Y."/>
            <person name="Ozaki K."/>
            <person name="Hirao M."/>
            <person name="Ohmori Y."/>
            <person name="Kawabata A."/>
            <person name="Hikiji T."/>
            <person name="Kobatake N."/>
            <person name="Inagaki H."/>
            <person name="Ikema Y."/>
            <person name="Okamoto S."/>
            <person name="Okitani R."/>
            <person name="Kawakami T."/>
            <person name="Noguchi S."/>
            <person name="Itoh T."/>
            <person name="Shigeta K."/>
            <person name="Senba T."/>
            <person name="Matsumura K."/>
            <person name="Nakajima Y."/>
            <person name="Mizuno T."/>
            <person name="Morinaga M."/>
            <person name="Sasaki M."/>
            <person name="Togashi T."/>
            <person name="Oyama M."/>
            <person name="Hata H."/>
            <person name="Watanabe M."/>
            <person name="Komatsu T."/>
            <person name="Mizushima-Sugano J."/>
            <person name="Satoh T."/>
            <person name="Shirai Y."/>
            <person name="Takahashi Y."/>
            <person name="Nakagawa K."/>
            <person name="Okumura K."/>
            <person name="Nagase T."/>
            <person name="Nomura N."/>
            <person name="Kikuchi H."/>
            <person name="Masuho Y."/>
            <person name="Yamashita R."/>
            <person name="Nakai K."/>
            <person name="Yada T."/>
            <person name="Nakamura Y."/>
            <person name="Ohara O."/>
            <person name="Isogai T."/>
            <person name="Sugano S."/>
        </authorList>
    </citation>
    <scope>NUCLEOTIDE SEQUENCE [LARGE SCALE MRNA] (ISOFORMS 2 AND 3)</scope>
    <source>
        <tissue>Mammary gland</tissue>
    </source>
</reference>
<reference key="5">
    <citation type="journal article" date="2006" name="Nature">
        <title>The DNA sequence and biological annotation of human chromosome 1.</title>
        <authorList>
            <person name="Gregory S.G."/>
            <person name="Barlow K.F."/>
            <person name="McLay K.E."/>
            <person name="Kaul R."/>
            <person name="Swarbreck D."/>
            <person name="Dunham A."/>
            <person name="Scott C.E."/>
            <person name="Howe K.L."/>
            <person name="Woodfine K."/>
            <person name="Spencer C.C.A."/>
            <person name="Jones M.C."/>
            <person name="Gillson C."/>
            <person name="Searle S."/>
            <person name="Zhou Y."/>
            <person name="Kokocinski F."/>
            <person name="McDonald L."/>
            <person name="Evans R."/>
            <person name="Phillips K."/>
            <person name="Atkinson A."/>
            <person name="Cooper R."/>
            <person name="Jones C."/>
            <person name="Hall R.E."/>
            <person name="Andrews T.D."/>
            <person name="Lloyd C."/>
            <person name="Ainscough R."/>
            <person name="Almeida J.P."/>
            <person name="Ambrose K.D."/>
            <person name="Anderson F."/>
            <person name="Andrew R.W."/>
            <person name="Ashwell R.I.S."/>
            <person name="Aubin K."/>
            <person name="Babbage A.K."/>
            <person name="Bagguley C.L."/>
            <person name="Bailey J."/>
            <person name="Beasley H."/>
            <person name="Bethel G."/>
            <person name="Bird C.P."/>
            <person name="Bray-Allen S."/>
            <person name="Brown J.Y."/>
            <person name="Brown A.J."/>
            <person name="Buckley D."/>
            <person name="Burton J."/>
            <person name="Bye J."/>
            <person name="Carder C."/>
            <person name="Chapman J.C."/>
            <person name="Clark S.Y."/>
            <person name="Clarke G."/>
            <person name="Clee C."/>
            <person name="Cobley V."/>
            <person name="Collier R.E."/>
            <person name="Corby N."/>
            <person name="Coville G.J."/>
            <person name="Davies J."/>
            <person name="Deadman R."/>
            <person name="Dunn M."/>
            <person name="Earthrowl M."/>
            <person name="Ellington A.G."/>
            <person name="Errington H."/>
            <person name="Frankish A."/>
            <person name="Frankland J."/>
            <person name="French L."/>
            <person name="Garner P."/>
            <person name="Garnett J."/>
            <person name="Gay L."/>
            <person name="Ghori M.R.J."/>
            <person name="Gibson R."/>
            <person name="Gilby L.M."/>
            <person name="Gillett W."/>
            <person name="Glithero R.J."/>
            <person name="Grafham D.V."/>
            <person name="Griffiths C."/>
            <person name="Griffiths-Jones S."/>
            <person name="Grocock R."/>
            <person name="Hammond S."/>
            <person name="Harrison E.S.I."/>
            <person name="Hart E."/>
            <person name="Haugen E."/>
            <person name="Heath P.D."/>
            <person name="Holmes S."/>
            <person name="Holt K."/>
            <person name="Howden P.J."/>
            <person name="Hunt A.R."/>
            <person name="Hunt S.E."/>
            <person name="Hunter G."/>
            <person name="Isherwood J."/>
            <person name="James R."/>
            <person name="Johnson C."/>
            <person name="Johnson D."/>
            <person name="Joy A."/>
            <person name="Kay M."/>
            <person name="Kershaw J.K."/>
            <person name="Kibukawa M."/>
            <person name="Kimberley A.M."/>
            <person name="King A."/>
            <person name="Knights A.J."/>
            <person name="Lad H."/>
            <person name="Laird G."/>
            <person name="Lawlor S."/>
            <person name="Leongamornlert D.A."/>
            <person name="Lloyd D.M."/>
            <person name="Loveland J."/>
            <person name="Lovell J."/>
            <person name="Lush M.J."/>
            <person name="Lyne R."/>
            <person name="Martin S."/>
            <person name="Mashreghi-Mohammadi M."/>
            <person name="Matthews L."/>
            <person name="Matthews N.S.W."/>
            <person name="McLaren S."/>
            <person name="Milne S."/>
            <person name="Mistry S."/>
            <person name="Moore M.J.F."/>
            <person name="Nickerson T."/>
            <person name="O'Dell C.N."/>
            <person name="Oliver K."/>
            <person name="Palmeiri A."/>
            <person name="Palmer S.A."/>
            <person name="Parker A."/>
            <person name="Patel D."/>
            <person name="Pearce A.V."/>
            <person name="Peck A.I."/>
            <person name="Pelan S."/>
            <person name="Phelps K."/>
            <person name="Phillimore B.J."/>
            <person name="Plumb R."/>
            <person name="Rajan J."/>
            <person name="Raymond C."/>
            <person name="Rouse G."/>
            <person name="Saenphimmachak C."/>
            <person name="Sehra H.K."/>
            <person name="Sheridan E."/>
            <person name="Shownkeen R."/>
            <person name="Sims S."/>
            <person name="Skuce C.D."/>
            <person name="Smith M."/>
            <person name="Steward C."/>
            <person name="Subramanian S."/>
            <person name="Sycamore N."/>
            <person name="Tracey A."/>
            <person name="Tromans A."/>
            <person name="Van Helmond Z."/>
            <person name="Wall M."/>
            <person name="Wallis J.M."/>
            <person name="White S."/>
            <person name="Whitehead S.L."/>
            <person name="Wilkinson J.E."/>
            <person name="Willey D.L."/>
            <person name="Williams H."/>
            <person name="Wilming L."/>
            <person name="Wray P.W."/>
            <person name="Wu Z."/>
            <person name="Coulson A."/>
            <person name="Vaudin M."/>
            <person name="Sulston J.E."/>
            <person name="Durbin R.M."/>
            <person name="Hubbard T."/>
            <person name="Wooster R."/>
            <person name="Dunham I."/>
            <person name="Carter N.P."/>
            <person name="McVean G."/>
            <person name="Ross M.T."/>
            <person name="Harrow J."/>
            <person name="Olson M.V."/>
            <person name="Beck S."/>
            <person name="Rogers J."/>
            <person name="Bentley D.R."/>
        </authorList>
    </citation>
    <scope>NUCLEOTIDE SEQUENCE [LARGE SCALE GENOMIC DNA]</scope>
</reference>
<reference key="6">
    <citation type="journal article" date="2004" name="Genome Res.">
        <title>The status, quality, and expansion of the NIH full-length cDNA project: the Mammalian Gene Collection (MGC).</title>
        <authorList>
            <consortium name="The MGC Project Team"/>
        </authorList>
    </citation>
    <scope>NUCLEOTIDE SEQUENCE [LARGE SCALE MRNA] (ISOFORM 1)</scope>
    <source>
        <tissue>Uterus</tissue>
    </source>
</reference>
<reference key="7">
    <citation type="journal article" date="2023" name="Nat. Commun.">
        <title>Antiviral HIV-1 SERINC restriction factors disrupt virus membrane asymmetry.</title>
        <authorList>
            <person name="Leonhardt S.A."/>
            <person name="Purdy M.D."/>
            <person name="Grover J.R."/>
            <person name="Yang Z."/>
            <person name="Poulos S."/>
            <person name="McIntire W.E."/>
            <person name="Tatham E.A."/>
            <person name="Erramilli S.K."/>
            <person name="Nosol K."/>
            <person name="Lai K.K."/>
            <person name="Ding S."/>
            <person name="Lu M."/>
            <person name="Uchil P.D."/>
            <person name="Finzi A."/>
            <person name="Rein A."/>
            <person name="Kossiakoff A.A."/>
            <person name="Mothes W."/>
            <person name="Yeager M."/>
        </authorList>
    </citation>
    <scope>FUNCTION</scope>
    <scope>CATALYTIC ACTIVITY</scope>
    <scope>SUBCELLULAR LOCATION</scope>
</reference>
<proteinExistence type="evidence at protein level"/>
<name>SERC2_HUMAN</name>
<comment type="function">
    <text evidence="2">Non-ATP-dependent, non-specific lipid transporter for phosphatidylserine, phosphatidylcholine, and phosphatidylethanolamine. Functions as a scramblase that flips lipids in both directions across the membrane. In contrast to SERINC3 and SERINC5, has no effect on HIV-1 particles infectivity.</text>
</comment>
<comment type="catalytic activity">
    <reaction evidence="2">
        <text>a 1,2-diacyl-sn-glycero-3-phospho-L-serine(in) = a 1,2-diacyl-sn-glycero-3-phospho-L-serine(out)</text>
        <dbReference type="Rhea" id="RHEA:38663"/>
        <dbReference type="ChEBI" id="CHEBI:57262"/>
    </reaction>
</comment>
<comment type="catalytic activity">
    <reaction evidence="2">
        <text>a 1,2-diacyl-sn-glycero-3-phosphocholine(in) = a 1,2-diacyl-sn-glycero-3-phosphocholine(out)</text>
        <dbReference type="Rhea" id="RHEA:38571"/>
        <dbReference type="ChEBI" id="CHEBI:57643"/>
    </reaction>
</comment>
<comment type="catalytic activity">
    <reaction evidence="2">
        <text>a 1,2-diacyl-sn-glycero-3-phosphoethanolamine(in) = a 1,2-diacyl-sn-glycero-3-phosphoethanolamine(out)</text>
        <dbReference type="Rhea" id="RHEA:38895"/>
        <dbReference type="ChEBI" id="CHEBI:64612"/>
    </reaction>
</comment>
<comment type="subcellular location">
    <subcellularLocation>
        <location evidence="4">Cell membrane</location>
        <topology evidence="1">Multi-pass membrane protein</topology>
    </subcellularLocation>
</comment>
<comment type="alternative products">
    <event type="alternative splicing"/>
    <isoform>
        <id>Q96SA4-1</id>
        <name>1</name>
        <sequence type="displayed"/>
    </isoform>
    <isoform>
        <id>Q96SA4-2</id>
        <name>2</name>
        <sequence type="described" ref="VSP_042464"/>
    </isoform>
    <isoform>
        <id>Q96SA4-3</id>
        <name>3</name>
        <sequence type="described" ref="VSP_042463"/>
    </isoform>
    <isoform>
        <id>Q96SA4-4</id>
        <name>4</name>
        <sequence type="described" ref="VSP_046840"/>
    </isoform>
</comment>
<comment type="similarity">
    <text evidence="4">Belongs to the TDE1 family.</text>
</comment>
<accession>Q96SA4</accession>
<accession>A0AVB4</accession>
<accession>B4DJK5</accession>
<accession>B7Z567</accession>
<accession>B7ZAP2</accession>
<accession>E7EUZ9</accession>
<accession>Q86Y23</accession>
<dbReference type="EMBL" id="AF352325">
    <property type="protein sequence ID" value="AAK83284.1"/>
    <property type="molecule type" value="mRNA"/>
</dbReference>
<dbReference type="EMBL" id="AY094595">
    <property type="protein sequence ID" value="AAM22522.1"/>
    <property type="molecule type" value="mRNA"/>
</dbReference>
<dbReference type="EMBL" id="AY358560">
    <property type="protein sequence ID" value="AAQ88924.1"/>
    <property type="molecule type" value="mRNA"/>
</dbReference>
<dbReference type="EMBL" id="AK298512">
    <property type="protein sequence ID" value="BAH12803.1"/>
    <property type="molecule type" value="mRNA"/>
</dbReference>
<dbReference type="EMBL" id="AK316357">
    <property type="protein sequence ID" value="BAH14728.1"/>
    <property type="molecule type" value="mRNA"/>
</dbReference>
<dbReference type="EMBL" id="AK296118">
    <property type="protein sequence ID" value="BAG58867.1"/>
    <property type="molecule type" value="mRNA"/>
</dbReference>
<dbReference type="EMBL" id="AC114494">
    <property type="status" value="NOT_ANNOTATED_CDS"/>
    <property type="molecule type" value="Genomic_DNA"/>
</dbReference>
<dbReference type="EMBL" id="BC084580">
    <property type="protein sequence ID" value="AAH84580.1"/>
    <property type="molecule type" value="mRNA"/>
</dbReference>
<dbReference type="EMBL" id="BC126283">
    <property type="protein sequence ID" value="AAI26284.1"/>
    <property type="molecule type" value="mRNA"/>
</dbReference>
<dbReference type="EMBL" id="BC126285">
    <property type="protein sequence ID" value="AAI26286.1"/>
    <property type="molecule type" value="mRNA"/>
</dbReference>
<dbReference type="CCDS" id="CCDS30662.1">
    <molecule id="Q96SA4-1"/>
</dbReference>
<dbReference type="CCDS" id="CCDS55583.1">
    <molecule id="Q96SA4-4"/>
</dbReference>
<dbReference type="CCDS" id="CCDS55584.1">
    <molecule id="Q96SA4-3"/>
</dbReference>
<dbReference type="CCDS" id="CCDS55585.1">
    <molecule id="Q96SA4-2"/>
</dbReference>
<dbReference type="RefSeq" id="NP_001185966.1">
    <molecule id="Q96SA4-3"/>
    <property type="nucleotide sequence ID" value="NM_001199037.2"/>
</dbReference>
<dbReference type="RefSeq" id="NP_001185967.1">
    <molecule id="Q96SA4-4"/>
    <property type="nucleotide sequence ID" value="NM_001199038.2"/>
</dbReference>
<dbReference type="RefSeq" id="NP_001185968.1">
    <property type="nucleotide sequence ID" value="NM_001199039.1"/>
</dbReference>
<dbReference type="RefSeq" id="NP_061035.2">
    <molecule id="Q96SA4-2"/>
    <property type="nucleotide sequence ID" value="NM_018565.3"/>
</dbReference>
<dbReference type="RefSeq" id="NP_849196.2">
    <molecule id="Q96SA4-1"/>
    <property type="nucleotide sequence ID" value="NM_178865.5"/>
</dbReference>
<dbReference type="SMR" id="Q96SA4"/>
<dbReference type="BioGRID" id="131485">
    <property type="interactions" value="58"/>
</dbReference>
<dbReference type="FunCoup" id="Q96SA4">
    <property type="interactions" value="465"/>
</dbReference>
<dbReference type="IntAct" id="Q96SA4">
    <property type="interactions" value="33"/>
</dbReference>
<dbReference type="STRING" id="9606.ENSP00000362814"/>
<dbReference type="iPTMnet" id="Q96SA4"/>
<dbReference type="PhosphoSitePlus" id="Q96SA4"/>
<dbReference type="SwissPalm" id="Q96SA4"/>
<dbReference type="BioMuta" id="SERINC2"/>
<dbReference type="DMDM" id="380865453"/>
<dbReference type="jPOST" id="Q96SA4"/>
<dbReference type="MassIVE" id="Q96SA4"/>
<dbReference type="PaxDb" id="9606-ENSP00000362814"/>
<dbReference type="PeptideAtlas" id="Q96SA4"/>
<dbReference type="ProteomicsDB" id="18537"/>
<dbReference type="ProteomicsDB" id="78094">
    <molecule id="Q96SA4-1"/>
</dbReference>
<dbReference type="ProteomicsDB" id="78095">
    <molecule id="Q96SA4-2"/>
</dbReference>
<dbReference type="ProteomicsDB" id="78096">
    <molecule id="Q96SA4-3"/>
</dbReference>
<dbReference type="Antibodypedia" id="31115">
    <property type="antibodies" value="164 antibodies from 28 providers"/>
</dbReference>
<dbReference type="DNASU" id="347735"/>
<dbReference type="Ensembl" id="ENST00000373709.8">
    <molecule id="Q96SA4-1"/>
    <property type="protein sequence ID" value="ENSP00000362813.3"/>
    <property type="gene ID" value="ENSG00000168528.12"/>
</dbReference>
<dbReference type="Ensembl" id="ENST00000373710.5">
    <molecule id="Q96SA4-4"/>
    <property type="protein sequence ID" value="ENSP00000362814.1"/>
    <property type="gene ID" value="ENSG00000168528.12"/>
</dbReference>
<dbReference type="Ensembl" id="ENST00000536384.2">
    <molecule id="Q96SA4-2"/>
    <property type="protein sequence ID" value="ENSP00000439048.1"/>
    <property type="gene ID" value="ENSG00000168528.12"/>
</dbReference>
<dbReference type="Ensembl" id="ENST00000536859.5">
    <molecule id="Q96SA4-3"/>
    <property type="protein sequence ID" value="ENSP00000444307.1"/>
    <property type="gene ID" value="ENSG00000168528.12"/>
</dbReference>
<dbReference type="GeneID" id="347735"/>
<dbReference type="KEGG" id="hsa:347735"/>
<dbReference type="MANE-Select" id="ENST00000373709.8">
    <property type="protein sequence ID" value="ENSP00000362813.3"/>
    <property type="RefSeq nucleotide sequence ID" value="NM_178865.5"/>
    <property type="RefSeq protein sequence ID" value="NP_849196.2"/>
</dbReference>
<dbReference type="UCSC" id="uc001bst.4">
    <molecule id="Q96SA4-1"/>
    <property type="organism name" value="human"/>
</dbReference>
<dbReference type="AGR" id="HGNC:23231"/>
<dbReference type="CTD" id="347735"/>
<dbReference type="DisGeNET" id="347735"/>
<dbReference type="GeneCards" id="SERINC2"/>
<dbReference type="HGNC" id="HGNC:23231">
    <property type="gene designation" value="SERINC2"/>
</dbReference>
<dbReference type="HPA" id="ENSG00000168528">
    <property type="expression patterns" value="Tissue enhanced (liver)"/>
</dbReference>
<dbReference type="MIM" id="614549">
    <property type="type" value="gene"/>
</dbReference>
<dbReference type="neXtProt" id="NX_Q96SA4"/>
<dbReference type="OpenTargets" id="ENSG00000168528"/>
<dbReference type="PharmGKB" id="PA134933002"/>
<dbReference type="VEuPathDB" id="HostDB:ENSG00000168528"/>
<dbReference type="eggNOG" id="KOG2592">
    <property type="taxonomic scope" value="Eukaryota"/>
</dbReference>
<dbReference type="GeneTree" id="ENSGT01030000234623"/>
<dbReference type="HOGENOM" id="CLU_029574_5_0_1"/>
<dbReference type="InParanoid" id="Q96SA4"/>
<dbReference type="OMA" id="ECCESEK"/>
<dbReference type="OrthoDB" id="5963193at2759"/>
<dbReference type="PAN-GO" id="Q96SA4">
    <property type="GO annotations" value="1 GO annotation based on evolutionary models"/>
</dbReference>
<dbReference type="TreeFam" id="TF312881"/>
<dbReference type="PathwayCommons" id="Q96SA4"/>
<dbReference type="Reactome" id="R-HSA-977347">
    <property type="pathway name" value="Serine biosynthesis"/>
</dbReference>
<dbReference type="SignaLink" id="Q96SA4"/>
<dbReference type="BioGRID-ORCS" id="347735">
    <property type="hits" value="14 hits in 1150 CRISPR screens"/>
</dbReference>
<dbReference type="ChiTaRS" id="SERINC2">
    <property type="organism name" value="human"/>
</dbReference>
<dbReference type="GenomeRNAi" id="347735"/>
<dbReference type="Pharos" id="Q96SA4">
    <property type="development level" value="Tbio"/>
</dbReference>
<dbReference type="PRO" id="PR:Q96SA4"/>
<dbReference type="Proteomes" id="UP000005640">
    <property type="component" value="Chromosome 1"/>
</dbReference>
<dbReference type="RNAct" id="Q96SA4">
    <property type="molecule type" value="protein"/>
</dbReference>
<dbReference type="Bgee" id="ENSG00000168528">
    <property type="expression patterns" value="Expressed in mucosa of transverse colon and 130 other cell types or tissues"/>
</dbReference>
<dbReference type="GO" id="GO:0070062">
    <property type="term" value="C:extracellular exosome"/>
    <property type="evidence" value="ECO:0007005"/>
    <property type="project" value="UniProtKB"/>
</dbReference>
<dbReference type="GO" id="GO:0016020">
    <property type="term" value="C:membrane"/>
    <property type="evidence" value="ECO:0000318"/>
    <property type="project" value="GO_Central"/>
</dbReference>
<dbReference type="GO" id="GO:0005886">
    <property type="term" value="C:plasma membrane"/>
    <property type="evidence" value="ECO:0000314"/>
    <property type="project" value="UniProtKB"/>
</dbReference>
<dbReference type="GO" id="GO:0010698">
    <property type="term" value="F:acetyltransferase activator activity"/>
    <property type="evidence" value="ECO:0007669"/>
    <property type="project" value="Ensembl"/>
</dbReference>
<dbReference type="GO" id="GO:0017128">
    <property type="term" value="F:phospholipid scramblase activity"/>
    <property type="evidence" value="ECO:0000314"/>
    <property type="project" value="UniProtKB"/>
</dbReference>
<dbReference type="GO" id="GO:0006658">
    <property type="term" value="P:phosphatidylserine metabolic process"/>
    <property type="evidence" value="ECO:0007669"/>
    <property type="project" value="Ensembl"/>
</dbReference>
<dbReference type="GO" id="GO:0017121">
    <property type="term" value="P:plasma membrane phospholipid scrambling"/>
    <property type="evidence" value="ECO:0000314"/>
    <property type="project" value="UniProtKB"/>
</dbReference>
<dbReference type="InterPro" id="IPR005016">
    <property type="entry name" value="TDE1/TMS"/>
</dbReference>
<dbReference type="PANTHER" id="PTHR10383">
    <property type="entry name" value="SERINE INCORPORATOR"/>
    <property type="match status" value="1"/>
</dbReference>
<dbReference type="PANTHER" id="PTHR10383:SF22">
    <property type="entry name" value="SERINE INCORPORATOR 2"/>
    <property type="match status" value="1"/>
</dbReference>
<dbReference type="Pfam" id="PF03348">
    <property type="entry name" value="Serinc"/>
    <property type="match status" value="1"/>
</dbReference>
<evidence type="ECO:0000255" key="1"/>
<evidence type="ECO:0000269" key="2">
    <source>
    </source>
</evidence>
<evidence type="ECO:0000303" key="3">
    <source>
    </source>
</evidence>
<evidence type="ECO:0000305" key="4"/>
<evidence type="ECO:0000312" key="5">
    <source>
        <dbReference type="HGNC" id="HGNC:23231"/>
    </source>
</evidence>